<comment type="subcellular location">
    <subcellularLocation>
        <location>Plastid</location>
        <location>Chloroplast</location>
    </subcellularLocation>
</comment>
<comment type="similarity">
    <text evidence="1">Belongs to the bacterial ribosomal protein bL36 family.</text>
</comment>
<keyword id="KW-0150">Chloroplast</keyword>
<keyword id="KW-0934">Plastid</keyword>
<keyword id="KW-0687">Ribonucleoprotein</keyword>
<keyword id="KW-0689">Ribosomal protein</keyword>
<dbReference type="EMBL" id="AP009377">
    <property type="protein sequence ID" value="BAG16640.1"/>
    <property type="molecule type" value="Genomic_DNA"/>
</dbReference>
<dbReference type="RefSeq" id="YP_001806642.1">
    <property type="nucleotide sequence ID" value="NC_010548.1"/>
</dbReference>
<dbReference type="SMR" id="B1VKC9"/>
<dbReference type="GeneID" id="6166630"/>
<dbReference type="KEGG" id="cjf:6166630"/>
<dbReference type="GO" id="GO:0009507">
    <property type="term" value="C:chloroplast"/>
    <property type="evidence" value="ECO:0007669"/>
    <property type="project" value="UniProtKB-SubCell"/>
</dbReference>
<dbReference type="GO" id="GO:1990904">
    <property type="term" value="C:ribonucleoprotein complex"/>
    <property type="evidence" value="ECO:0007669"/>
    <property type="project" value="UniProtKB-KW"/>
</dbReference>
<dbReference type="GO" id="GO:0005840">
    <property type="term" value="C:ribosome"/>
    <property type="evidence" value="ECO:0007669"/>
    <property type="project" value="UniProtKB-KW"/>
</dbReference>
<dbReference type="GO" id="GO:0003735">
    <property type="term" value="F:structural constituent of ribosome"/>
    <property type="evidence" value="ECO:0007669"/>
    <property type="project" value="InterPro"/>
</dbReference>
<dbReference type="GO" id="GO:0006412">
    <property type="term" value="P:translation"/>
    <property type="evidence" value="ECO:0007669"/>
    <property type="project" value="UniProtKB-UniRule"/>
</dbReference>
<dbReference type="HAMAP" id="MF_00251">
    <property type="entry name" value="Ribosomal_bL36"/>
    <property type="match status" value="1"/>
</dbReference>
<dbReference type="InterPro" id="IPR000473">
    <property type="entry name" value="Ribosomal_bL36"/>
</dbReference>
<dbReference type="InterPro" id="IPR035977">
    <property type="entry name" value="Ribosomal_bL36_sp"/>
</dbReference>
<dbReference type="NCBIfam" id="TIGR01022">
    <property type="entry name" value="rpmJ_bact"/>
    <property type="match status" value="1"/>
</dbReference>
<dbReference type="PANTHER" id="PTHR42888">
    <property type="entry name" value="50S RIBOSOMAL PROTEIN L36, CHLOROPLASTIC"/>
    <property type="match status" value="1"/>
</dbReference>
<dbReference type="PANTHER" id="PTHR42888:SF1">
    <property type="entry name" value="LARGE RIBOSOMAL SUBUNIT PROTEIN BL36C"/>
    <property type="match status" value="1"/>
</dbReference>
<dbReference type="Pfam" id="PF00444">
    <property type="entry name" value="Ribosomal_L36"/>
    <property type="match status" value="1"/>
</dbReference>
<dbReference type="SUPFAM" id="SSF57840">
    <property type="entry name" value="Ribosomal protein L36"/>
    <property type="match status" value="1"/>
</dbReference>
<dbReference type="PROSITE" id="PS00828">
    <property type="entry name" value="RIBOSOMAL_L36"/>
    <property type="match status" value="1"/>
</dbReference>
<evidence type="ECO:0000255" key="1">
    <source>
        <dbReference type="HAMAP-Rule" id="MF_00251"/>
    </source>
</evidence>
<evidence type="ECO:0000305" key="2"/>
<name>RK36_CRYJA</name>
<sequence length="37" mass="4580">MKIRASVRKICEKCRLIRRRKRLLVICYNPRHKQKQG</sequence>
<feature type="chain" id="PRO_0000344752" description="Large ribosomal subunit protein bL36c">
    <location>
        <begin position="1"/>
        <end position="37"/>
    </location>
</feature>
<organism>
    <name type="scientific">Cryptomeria japonica</name>
    <name type="common">Japanese cedar</name>
    <name type="synonym">Cupressus japonica</name>
    <dbReference type="NCBI Taxonomy" id="3369"/>
    <lineage>
        <taxon>Eukaryota</taxon>
        <taxon>Viridiplantae</taxon>
        <taxon>Streptophyta</taxon>
        <taxon>Embryophyta</taxon>
        <taxon>Tracheophyta</taxon>
        <taxon>Spermatophyta</taxon>
        <taxon>Pinopsida</taxon>
        <taxon>Pinidae</taxon>
        <taxon>Conifers II</taxon>
        <taxon>Cupressales</taxon>
        <taxon>Cupressaceae</taxon>
        <taxon>Cryptomeria</taxon>
    </lineage>
</organism>
<accession>B1VKC9</accession>
<gene>
    <name evidence="1" type="primary">rpl36</name>
</gene>
<protein>
    <recommendedName>
        <fullName evidence="1">Large ribosomal subunit protein bL36c</fullName>
    </recommendedName>
    <alternativeName>
        <fullName evidence="2">50S ribosomal protein L36, chloroplastic</fullName>
    </alternativeName>
</protein>
<proteinExistence type="inferred from homology"/>
<geneLocation type="chloroplast"/>
<reference key="1">
    <citation type="journal article" date="2008" name="BMC Plant Biol.">
        <title>Complete nucleotide sequence of the Cryptomeria japonica D. Don. chloroplast genome and comparative chloroplast genomics: diversified genomic structure of coniferous species.</title>
        <authorList>
            <person name="Hirao T."/>
            <person name="Watanabe A."/>
            <person name="Kurita M."/>
            <person name="Kondo T."/>
            <person name="Takata K."/>
        </authorList>
    </citation>
    <scope>NUCLEOTIDE SEQUENCE [LARGE SCALE GENOMIC DNA]</scope>
</reference>